<evidence type="ECO:0000250" key="1">
    <source>
        <dbReference type="UniProtKB" id="P16933"/>
    </source>
</evidence>
<evidence type="ECO:0000250" key="2">
    <source>
        <dbReference type="UniProtKB" id="Q04571"/>
    </source>
</evidence>
<evidence type="ECO:0000255" key="3"/>
<evidence type="ECO:0000269" key="4">
    <source>
    </source>
</evidence>
<evidence type="ECO:0000303" key="5">
    <source>
    </source>
</evidence>
<evidence type="ECO:0000305" key="6"/>
<sequence>MQFTKMSAFATLALATLAAATPTRRNDSPSNQCNTGSLQCCNSLQSANSASLAGLLGLLGVVVGTITGQVGVTCSPITGVGVSGTSCSEQPVCCTNNAFNGVIALGCSPININL</sequence>
<protein>
    <recommendedName>
        <fullName evidence="5">Class I hydrophobin 1</fullName>
    </recommendedName>
    <alternativeName>
        <fullName evidence="5">Inorganic phosphate deficiency-inducible protein 251</fullName>
    </alternativeName>
</protein>
<dbReference type="EMBL" id="AB079128">
    <property type="protein sequence ID" value="BAB84545.1"/>
    <property type="molecule type" value="mRNA"/>
</dbReference>
<dbReference type="GO" id="GO:0005576">
    <property type="term" value="C:extracellular region"/>
    <property type="evidence" value="ECO:0007669"/>
    <property type="project" value="UniProtKB-KW"/>
</dbReference>
<dbReference type="GO" id="GO:0009277">
    <property type="term" value="C:fungal-type cell wall"/>
    <property type="evidence" value="ECO:0007669"/>
    <property type="project" value="InterPro"/>
</dbReference>
<dbReference type="GO" id="GO:0005199">
    <property type="term" value="F:structural constituent of cell wall"/>
    <property type="evidence" value="ECO:0007669"/>
    <property type="project" value="InterPro"/>
</dbReference>
<dbReference type="CDD" id="cd23507">
    <property type="entry name" value="hydrophobin_I"/>
    <property type="match status" value="1"/>
</dbReference>
<dbReference type="InterPro" id="IPR001338">
    <property type="entry name" value="Hydrophobin"/>
</dbReference>
<dbReference type="Pfam" id="PF01185">
    <property type="entry name" value="Hydrophobin"/>
    <property type="match status" value="1"/>
</dbReference>
<dbReference type="SMART" id="SM00075">
    <property type="entry name" value="HYDRO"/>
    <property type="match status" value="1"/>
</dbReference>
<accession>Q8X1T9</accession>
<keyword id="KW-0134">Cell wall</keyword>
<keyword id="KW-1015">Disulfide bond</keyword>
<keyword id="KW-0964">Secreted</keyword>
<keyword id="KW-0732">Signal</keyword>
<organism>
    <name type="scientific">Pholiota nameko</name>
    <dbReference type="NCBI Taxonomy" id="61267"/>
    <lineage>
        <taxon>Eukaryota</taxon>
        <taxon>Fungi</taxon>
        <taxon>Dikarya</taxon>
        <taxon>Basidiomycota</taxon>
        <taxon>Agaricomycotina</taxon>
        <taxon>Agaricomycetes</taxon>
        <taxon>Agaricomycetidae</taxon>
        <taxon>Agaricales</taxon>
        <taxon>Agaricineae</taxon>
        <taxon>Strophariaceae</taxon>
        <taxon>Pholiota</taxon>
    </lineage>
</organism>
<comment type="function">
    <text evidence="4 6">Aerial growth, conidiation, and dispersal of filamentous fungi in the environment rely upon a capability of their secreting small amphipathic proteins called hydrophobins (HPBs) with low sequence identity. Class I can self-assemble into an outermost layer of rodlet bundles on aerial cell surfaces, conferring cellular hydrophobicity that supports fungal growth, development and dispersal; whereas Class II form highly ordered films at water-air interfaces through intermolecular interactions but contribute nothing to the rodlet structure (Probable). Pnh1 is a class I hydrophobin that might be involved in the attachment of the hydrophilic wall of hyphae to the hydrophobic surface of wood under inorganic phosphate (Pi)-deficient conditions and enable the mycelium to degrade efficiently the components of wood and to acquire nutrients containing Pi (PubMed:14608471).</text>
</comment>
<comment type="subunit">
    <text evidence="1">Self-assembles to form functional amyloid fibrils called rodlets. Self-assembly into fibrillar rodlets occurs spontaneously at hydrophobic:hydrophilic interfaces and the rodlets further associate laterally to form amphipathic monolayers.</text>
</comment>
<comment type="subcellular location">
    <subcellularLocation>
        <location evidence="1">Secreted</location>
    </subcellularLocation>
    <subcellularLocation>
        <location evidence="1">Secreted</location>
        <location evidence="1">Cell wall</location>
    </subcellularLocation>
</comment>
<comment type="induction">
    <text evidence="4">Expression is induced under conditions of inorganic phosphate (Pi) deficiency.</text>
</comment>
<comment type="similarity">
    <text evidence="6">Belongs to the fungal hydrophobin family.</text>
</comment>
<proteinExistence type="evidence at transcript level"/>
<reference key="1">
    <citation type="journal article" date="2004" name="Curr. Genet.">
        <title>Three genes specifically expressed during phosphate deficiency in Pholiota nameko strain N2 encode hydrophobins.</title>
        <authorList>
            <person name="Tasaki Y."/>
            <person name="Ohata K."/>
            <person name="Hara T."/>
            <person name="Joh T."/>
        </authorList>
    </citation>
    <scope>NUCLEOTIDE SEQUENCE [MRNA]</scope>
    <scope>FUNCTION</scope>
    <scope>INDUCTION</scope>
    <source>
        <strain>N2</strain>
    </source>
</reference>
<feature type="signal peptide" evidence="3">
    <location>
        <begin position="1"/>
        <end position="20"/>
    </location>
</feature>
<feature type="chain" id="PRO_5013987383" description="Class I hydrophobin 1">
    <location>
        <begin position="21"/>
        <end position="114"/>
    </location>
</feature>
<feature type="disulfide bond" evidence="2">
    <location>
        <begin position="33"/>
        <end position="93"/>
    </location>
</feature>
<feature type="disulfide bond" evidence="2">
    <location>
        <begin position="40"/>
        <end position="87"/>
    </location>
</feature>
<feature type="disulfide bond" evidence="2">
    <location>
        <begin position="41"/>
        <end position="74"/>
    </location>
</feature>
<feature type="disulfide bond" evidence="2">
    <location>
        <begin position="94"/>
        <end position="107"/>
    </location>
</feature>
<gene>
    <name evidence="5" type="primary">pnh1</name>
    <name evidence="5" type="synonym">pdi251</name>
</gene>
<name>PNH1_PHONA</name>